<feature type="chain" id="PRO_0000134768" description="6,7-dimethyl-8-ribityllumazine synthase">
    <location>
        <begin position="1"/>
        <end position="151"/>
    </location>
</feature>
<feature type="active site" description="Proton donor" evidence="1">
    <location>
        <position position="87"/>
    </location>
</feature>
<feature type="binding site" evidence="1">
    <location>
        <position position="23"/>
    </location>
    <ligand>
        <name>5-amino-6-(D-ribitylamino)uracil</name>
        <dbReference type="ChEBI" id="CHEBI:15934"/>
    </ligand>
</feature>
<feature type="binding site" evidence="1">
    <location>
        <begin position="55"/>
        <end position="57"/>
    </location>
    <ligand>
        <name>5-amino-6-(D-ribitylamino)uracil</name>
        <dbReference type="ChEBI" id="CHEBI:15934"/>
    </ligand>
</feature>
<feature type="binding site" evidence="1">
    <location>
        <begin position="79"/>
        <end position="81"/>
    </location>
    <ligand>
        <name>5-amino-6-(D-ribitylamino)uracil</name>
        <dbReference type="ChEBI" id="CHEBI:15934"/>
    </ligand>
</feature>
<feature type="binding site" evidence="1">
    <location>
        <begin position="84"/>
        <end position="85"/>
    </location>
    <ligand>
        <name>(2S)-2-hydroxy-3-oxobutyl phosphate</name>
        <dbReference type="ChEBI" id="CHEBI:58830"/>
    </ligand>
</feature>
<feature type="binding site" evidence="1">
    <location>
        <position position="111"/>
    </location>
    <ligand>
        <name>5-amino-6-(D-ribitylamino)uracil</name>
        <dbReference type="ChEBI" id="CHEBI:15934"/>
    </ligand>
</feature>
<feature type="binding site" evidence="1">
    <location>
        <position position="125"/>
    </location>
    <ligand>
        <name>(2S)-2-hydroxy-3-oxobutyl phosphate</name>
        <dbReference type="ChEBI" id="CHEBI:58830"/>
    </ligand>
</feature>
<evidence type="ECO:0000255" key="1">
    <source>
        <dbReference type="HAMAP-Rule" id="MF_00178"/>
    </source>
</evidence>
<organism>
    <name type="scientific">Leptospira interrogans serogroup Icterohaemorrhagiae serovar copenhageni (strain Fiocruz L1-130)</name>
    <dbReference type="NCBI Taxonomy" id="267671"/>
    <lineage>
        <taxon>Bacteria</taxon>
        <taxon>Pseudomonadati</taxon>
        <taxon>Spirochaetota</taxon>
        <taxon>Spirochaetia</taxon>
        <taxon>Leptospirales</taxon>
        <taxon>Leptospiraceae</taxon>
        <taxon>Leptospira</taxon>
    </lineage>
</organism>
<dbReference type="EC" id="2.5.1.78" evidence="1"/>
<dbReference type="EMBL" id="AE016823">
    <property type="protein sequence ID" value="AAS69026.1"/>
    <property type="molecule type" value="Genomic_DNA"/>
</dbReference>
<dbReference type="SMR" id="P61724"/>
<dbReference type="KEGG" id="lic:LIC_10403"/>
<dbReference type="HOGENOM" id="CLU_089358_1_1_12"/>
<dbReference type="UniPathway" id="UPA00275">
    <property type="reaction ID" value="UER00404"/>
</dbReference>
<dbReference type="Proteomes" id="UP000007037">
    <property type="component" value="Chromosome I"/>
</dbReference>
<dbReference type="GO" id="GO:0005829">
    <property type="term" value="C:cytosol"/>
    <property type="evidence" value="ECO:0007669"/>
    <property type="project" value="TreeGrafter"/>
</dbReference>
<dbReference type="GO" id="GO:0009349">
    <property type="term" value="C:riboflavin synthase complex"/>
    <property type="evidence" value="ECO:0007669"/>
    <property type="project" value="InterPro"/>
</dbReference>
<dbReference type="GO" id="GO:0000906">
    <property type="term" value="F:6,7-dimethyl-8-ribityllumazine synthase activity"/>
    <property type="evidence" value="ECO:0007669"/>
    <property type="project" value="UniProtKB-UniRule"/>
</dbReference>
<dbReference type="GO" id="GO:0009231">
    <property type="term" value="P:riboflavin biosynthetic process"/>
    <property type="evidence" value="ECO:0007669"/>
    <property type="project" value="UniProtKB-UniRule"/>
</dbReference>
<dbReference type="CDD" id="cd09209">
    <property type="entry name" value="Lumazine_synthase-I"/>
    <property type="match status" value="1"/>
</dbReference>
<dbReference type="FunFam" id="3.40.50.960:FF:000001">
    <property type="entry name" value="6,7-dimethyl-8-ribityllumazine synthase"/>
    <property type="match status" value="1"/>
</dbReference>
<dbReference type="Gene3D" id="3.40.50.960">
    <property type="entry name" value="Lumazine/riboflavin synthase"/>
    <property type="match status" value="1"/>
</dbReference>
<dbReference type="HAMAP" id="MF_00178">
    <property type="entry name" value="Lumazine_synth"/>
    <property type="match status" value="1"/>
</dbReference>
<dbReference type="InterPro" id="IPR034964">
    <property type="entry name" value="LS"/>
</dbReference>
<dbReference type="InterPro" id="IPR002180">
    <property type="entry name" value="LS/RS"/>
</dbReference>
<dbReference type="InterPro" id="IPR036467">
    <property type="entry name" value="LS/RS_sf"/>
</dbReference>
<dbReference type="NCBIfam" id="TIGR00114">
    <property type="entry name" value="lumazine-synth"/>
    <property type="match status" value="1"/>
</dbReference>
<dbReference type="NCBIfam" id="NF000812">
    <property type="entry name" value="PRK00061.1-4"/>
    <property type="match status" value="1"/>
</dbReference>
<dbReference type="PANTHER" id="PTHR21058:SF0">
    <property type="entry name" value="6,7-DIMETHYL-8-RIBITYLLUMAZINE SYNTHASE"/>
    <property type="match status" value="1"/>
</dbReference>
<dbReference type="PANTHER" id="PTHR21058">
    <property type="entry name" value="6,7-DIMETHYL-8-RIBITYLLUMAZINE SYNTHASE DMRL SYNTHASE LUMAZINE SYNTHASE"/>
    <property type="match status" value="1"/>
</dbReference>
<dbReference type="Pfam" id="PF00885">
    <property type="entry name" value="DMRL_synthase"/>
    <property type="match status" value="1"/>
</dbReference>
<dbReference type="SUPFAM" id="SSF52121">
    <property type="entry name" value="Lumazine synthase"/>
    <property type="match status" value="1"/>
</dbReference>
<sequence>MIQELKADLNGKGQKHCVIVSRFNEFITESLLKGALESFRMHGVEDVTVVRVPGAYEMPVVVSKAAASKKYDSIVCLGAVIRGATAHFDLVAGESAKIGSIGVQHSIPVIFGVLTTDTIEQAIERAGTKAGNKGAEAAATAVEMVNLLSLL</sequence>
<accession>P61724</accession>
<keyword id="KW-0686">Riboflavin biosynthesis</keyword>
<keyword id="KW-0808">Transferase</keyword>
<name>RISB_LEPIC</name>
<comment type="function">
    <text evidence="1">Catalyzes the formation of 6,7-dimethyl-8-ribityllumazine by condensation of 5-amino-6-(D-ribitylamino)uracil with 3,4-dihydroxy-2-butanone 4-phosphate. This is the penultimate step in the biosynthesis of riboflavin.</text>
</comment>
<comment type="catalytic activity">
    <reaction evidence="1">
        <text>(2S)-2-hydroxy-3-oxobutyl phosphate + 5-amino-6-(D-ribitylamino)uracil = 6,7-dimethyl-8-(1-D-ribityl)lumazine + phosphate + 2 H2O + H(+)</text>
        <dbReference type="Rhea" id="RHEA:26152"/>
        <dbReference type="ChEBI" id="CHEBI:15377"/>
        <dbReference type="ChEBI" id="CHEBI:15378"/>
        <dbReference type="ChEBI" id="CHEBI:15934"/>
        <dbReference type="ChEBI" id="CHEBI:43474"/>
        <dbReference type="ChEBI" id="CHEBI:58201"/>
        <dbReference type="ChEBI" id="CHEBI:58830"/>
        <dbReference type="EC" id="2.5.1.78"/>
    </reaction>
</comment>
<comment type="pathway">
    <text evidence="1">Cofactor biosynthesis; riboflavin biosynthesis; riboflavin from 2-hydroxy-3-oxobutyl phosphate and 5-amino-6-(D-ribitylamino)uracil: step 1/2.</text>
</comment>
<comment type="similarity">
    <text evidence="1">Belongs to the DMRL synthase family.</text>
</comment>
<reference key="1">
    <citation type="journal article" date="2004" name="J. Bacteriol.">
        <title>Comparative genomics of two Leptospira interrogans serovars reveals novel insights into physiology and pathogenesis.</title>
        <authorList>
            <person name="Nascimento A.L.T.O."/>
            <person name="Ko A.I."/>
            <person name="Martins E.A.L."/>
            <person name="Monteiro-Vitorello C.B."/>
            <person name="Ho P.L."/>
            <person name="Haake D.A."/>
            <person name="Verjovski-Almeida S."/>
            <person name="Hartskeerl R.A."/>
            <person name="Marques M.V."/>
            <person name="Oliveira M.C."/>
            <person name="Menck C.F.M."/>
            <person name="Leite L.C.C."/>
            <person name="Carrer H."/>
            <person name="Coutinho L.L."/>
            <person name="Degrave W.M."/>
            <person name="Dellagostin O.A."/>
            <person name="El-Dorry H."/>
            <person name="Ferro E.S."/>
            <person name="Ferro M.I.T."/>
            <person name="Furlan L.R."/>
            <person name="Gamberini M."/>
            <person name="Giglioti E.A."/>
            <person name="Goes-Neto A."/>
            <person name="Goldman G.H."/>
            <person name="Goldman M.H.S."/>
            <person name="Harakava R."/>
            <person name="Jeronimo S.M.B."/>
            <person name="Junqueira-de-Azevedo I.L.M."/>
            <person name="Kimura E.T."/>
            <person name="Kuramae E.E."/>
            <person name="Lemos E.G.M."/>
            <person name="Lemos M.V.F."/>
            <person name="Marino C.L."/>
            <person name="Nunes L.R."/>
            <person name="de Oliveira R.C."/>
            <person name="Pereira G.G."/>
            <person name="Reis M.S."/>
            <person name="Schriefer A."/>
            <person name="Siqueira W.J."/>
            <person name="Sommer P."/>
            <person name="Tsai S.M."/>
            <person name="Simpson A.J.G."/>
            <person name="Ferro J.A."/>
            <person name="Camargo L.E.A."/>
            <person name="Kitajima J.P."/>
            <person name="Setubal J.C."/>
            <person name="Van Sluys M.A."/>
        </authorList>
    </citation>
    <scope>NUCLEOTIDE SEQUENCE [LARGE SCALE GENOMIC DNA]</scope>
    <source>
        <strain>Fiocruz L1-130</strain>
    </source>
</reference>
<protein>
    <recommendedName>
        <fullName evidence="1">6,7-dimethyl-8-ribityllumazine synthase</fullName>
        <shortName evidence="1">DMRL synthase</shortName>
        <shortName evidence="1">LS</shortName>
        <shortName evidence="1">Lumazine synthase</shortName>
        <ecNumber evidence="1">2.5.1.78</ecNumber>
    </recommendedName>
</protein>
<proteinExistence type="inferred from homology"/>
<gene>
    <name evidence="1" type="primary">ribH</name>
    <name type="synonym">risB</name>
    <name type="ordered locus">LIC_10403</name>
</gene>